<sequence>MELNSIKPAEGAKHAKRRVGRGIGSGLGKTAGRGHKGQKSRSGGYHKVGFEGGQMPLQRRLPKRGFKSHLLKFNAEVTLSTLEQLGLAEVDLAALKSAGVVGQLAKVVKVIKSGELTKAVKLNGIGATAGAKAAIEAAGGSLA</sequence>
<keyword id="KW-0687">Ribonucleoprotein</keyword>
<keyword id="KW-0689">Ribosomal protein</keyword>
<keyword id="KW-0694">RNA-binding</keyword>
<keyword id="KW-0699">rRNA-binding</keyword>
<evidence type="ECO:0000255" key="1">
    <source>
        <dbReference type="HAMAP-Rule" id="MF_01341"/>
    </source>
</evidence>
<evidence type="ECO:0000256" key="2">
    <source>
        <dbReference type="SAM" id="MobiDB-lite"/>
    </source>
</evidence>
<evidence type="ECO:0000305" key="3"/>
<organism>
    <name type="scientific">Paracidovorax citrulli (strain AAC00-1)</name>
    <name type="common">Acidovorax citrulli</name>
    <dbReference type="NCBI Taxonomy" id="397945"/>
    <lineage>
        <taxon>Bacteria</taxon>
        <taxon>Pseudomonadati</taxon>
        <taxon>Pseudomonadota</taxon>
        <taxon>Betaproteobacteria</taxon>
        <taxon>Burkholderiales</taxon>
        <taxon>Comamonadaceae</taxon>
        <taxon>Paracidovorax</taxon>
    </lineage>
</organism>
<proteinExistence type="inferred from homology"/>
<feature type="chain" id="PRO_1000054415" description="Large ribosomal subunit protein uL15">
    <location>
        <begin position="1"/>
        <end position="143"/>
    </location>
</feature>
<feature type="region of interest" description="Disordered" evidence="2">
    <location>
        <begin position="1"/>
        <end position="54"/>
    </location>
</feature>
<feature type="compositionally biased region" description="Gly residues" evidence="2">
    <location>
        <begin position="21"/>
        <end position="31"/>
    </location>
</feature>
<reference key="1">
    <citation type="submission" date="2006-12" db="EMBL/GenBank/DDBJ databases">
        <title>Complete sequence of Acidovorax avenae subsp. citrulli AAC00-1.</title>
        <authorList>
            <person name="Copeland A."/>
            <person name="Lucas S."/>
            <person name="Lapidus A."/>
            <person name="Barry K."/>
            <person name="Detter J.C."/>
            <person name="Glavina del Rio T."/>
            <person name="Dalin E."/>
            <person name="Tice H."/>
            <person name="Pitluck S."/>
            <person name="Kiss H."/>
            <person name="Brettin T."/>
            <person name="Bruce D."/>
            <person name="Han C."/>
            <person name="Tapia R."/>
            <person name="Gilna P."/>
            <person name="Schmutz J."/>
            <person name="Larimer F."/>
            <person name="Land M."/>
            <person name="Hauser L."/>
            <person name="Kyrpides N."/>
            <person name="Kim E."/>
            <person name="Stahl D."/>
            <person name="Richardson P."/>
        </authorList>
    </citation>
    <scope>NUCLEOTIDE SEQUENCE [LARGE SCALE GENOMIC DNA]</scope>
    <source>
        <strain>AAC00-1</strain>
    </source>
</reference>
<protein>
    <recommendedName>
        <fullName evidence="1">Large ribosomal subunit protein uL15</fullName>
    </recommendedName>
    <alternativeName>
        <fullName evidence="3">50S ribosomal protein L15</fullName>
    </alternativeName>
</protein>
<name>RL15_PARC0</name>
<gene>
    <name evidence="1" type="primary">rplO</name>
    <name type="ordered locus">Aave_0620</name>
</gene>
<dbReference type="EMBL" id="CP000512">
    <property type="protein sequence ID" value="ABM31224.1"/>
    <property type="molecule type" value="Genomic_DNA"/>
</dbReference>
<dbReference type="RefSeq" id="WP_011793795.1">
    <property type="nucleotide sequence ID" value="NC_008752.1"/>
</dbReference>
<dbReference type="SMR" id="A1TJT6"/>
<dbReference type="STRING" id="397945.Aave_0620"/>
<dbReference type="GeneID" id="79790334"/>
<dbReference type="KEGG" id="aav:Aave_0620"/>
<dbReference type="eggNOG" id="COG0200">
    <property type="taxonomic scope" value="Bacteria"/>
</dbReference>
<dbReference type="HOGENOM" id="CLU_055188_4_2_4"/>
<dbReference type="OrthoDB" id="9810293at2"/>
<dbReference type="Proteomes" id="UP000002596">
    <property type="component" value="Chromosome"/>
</dbReference>
<dbReference type="GO" id="GO:0022625">
    <property type="term" value="C:cytosolic large ribosomal subunit"/>
    <property type="evidence" value="ECO:0007669"/>
    <property type="project" value="TreeGrafter"/>
</dbReference>
<dbReference type="GO" id="GO:0019843">
    <property type="term" value="F:rRNA binding"/>
    <property type="evidence" value="ECO:0007669"/>
    <property type="project" value="UniProtKB-UniRule"/>
</dbReference>
<dbReference type="GO" id="GO:0003735">
    <property type="term" value="F:structural constituent of ribosome"/>
    <property type="evidence" value="ECO:0007669"/>
    <property type="project" value="InterPro"/>
</dbReference>
<dbReference type="GO" id="GO:0006412">
    <property type="term" value="P:translation"/>
    <property type="evidence" value="ECO:0007669"/>
    <property type="project" value="UniProtKB-UniRule"/>
</dbReference>
<dbReference type="Gene3D" id="3.100.10.10">
    <property type="match status" value="1"/>
</dbReference>
<dbReference type="HAMAP" id="MF_01341">
    <property type="entry name" value="Ribosomal_uL15"/>
    <property type="match status" value="1"/>
</dbReference>
<dbReference type="InterPro" id="IPR030878">
    <property type="entry name" value="Ribosomal_uL15"/>
</dbReference>
<dbReference type="InterPro" id="IPR021131">
    <property type="entry name" value="Ribosomal_uL15/eL18"/>
</dbReference>
<dbReference type="InterPro" id="IPR036227">
    <property type="entry name" value="Ribosomal_uL15/eL18_sf"/>
</dbReference>
<dbReference type="InterPro" id="IPR005749">
    <property type="entry name" value="Ribosomal_uL15_bac-type"/>
</dbReference>
<dbReference type="NCBIfam" id="TIGR01071">
    <property type="entry name" value="rplO_bact"/>
    <property type="match status" value="1"/>
</dbReference>
<dbReference type="PANTHER" id="PTHR12934">
    <property type="entry name" value="50S RIBOSOMAL PROTEIN L15"/>
    <property type="match status" value="1"/>
</dbReference>
<dbReference type="PANTHER" id="PTHR12934:SF11">
    <property type="entry name" value="LARGE RIBOSOMAL SUBUNIT PROTEIN UL15M"/>
    <property type="match status" value="1"/>
</dbReference>
<dbReference type="Pfam" id="PF00828">
    <property type="entry name" value="Ribosomal_L27A"/>
    <property type="match status" value="1"/>
</dbReference>
<dbReference type="SUPFAM" id="SSF52080">
    <property type="entry name" value="Ribosomal proteins L15p and L18e"/>
    <property type="match status" value="1"/>
</dbReference>
<accession>A1TJT6</accession>
<comment type="function">
    <text evidence="1">Binds to the 23S rRNA.</text>
</comment>
<comment type="subunit">
    <text evidence="1">Part of the 50S ribosomal subunit.</text>
</comment>
<comment type="similarity">
    <text evidence="1">Belongs to the universal ribosomal protein uL15 family.</text>
</comment>